<proteinExistence type="inferred from homology"/>
<organism>
    <name type="scientific">Neisseria meningitidis serogroup A / serotype 4A (strain DSM 15465 / Z2491)</name>
    <dbReference type="NCBI Taxonomy" id="122587"/>
    <lineage>
        <taxon>Bacteria</taxon>
        <taxon>Pseudomonadati</taxon>
        <taxon>Pseudomonadota</taxon>
        <taxon>Betaproteobacteria</taxon>
        <taxon>Neisseriales</taxon>
        <taxon>Neisseriaceae</taxon>
        <taxon>Neisseria</taxon>
    </lineage>
</organism>
<feature type="chain" id="PRO_0000147715" description="GTP cyclohydrolase FolE2">
    <location>
        <begin position="1"/>
        <end position="298"/>
    </location>
</feature>
<feature type="site" description="May be catalytically important" evidence="1">
    <location>
        <position position="188"/>
    </location>
</feature>
<protein>
    <recommendedName>
        <fullName evidence="1">GTP cyclohydrolase FolE2</fullName>
        <ecNumber evidence="1">3.5.4.16</ecNumber>
    </recommendedName>
</protein>
<sequence length="298" mass="33296">MQLLKASDIISHLQIDGIFPGGNAIPCTHLNNYMNIKEKQLMNTIADVQSSRDLRNLPINQVGIKDLRFPITLQTAEGIQSTVARLTMTVYLPAEQKGTHMSRFVALMEQHTEALDFAQLRRLTAEMVALLDSRAGKISVSFPFFRKKTAPVSGIRSLLDYDVSLTGEMKDGAYGHSMKVMIPVTSLCPCSKEISQYGAHNQRSHVTVSLTADAEVGIEEVIDYVEAQASCQLYGLLKRPDEKYVTEKAYENPKFVEDMVRDVATSLIADKRIKSFVVESENFESIHNHSAYAYIAYP</sequence>
<comment type="function">
    <text evidence="1">Converts GTP to 7,8-dihydroneopterin triphosphate.</text>
</comment>
<comment type="catalytic activity">
    <reaction evidence="1">
        <text>GTP + H2O = 7,8-dihydroneopterin 3'-triphosphate + formate + H(+)</text>
        <dbReference type="Rhea" id="RHEA:17473"/>
        <dbReference type="ChEBI" id="CHEBI:15377"/>
        <dbReference type="ChEBI" id="CHEBI:15378"/>
        <dbReference type="ChEBI" id="CHEBI:15740"/>
        <dbReference type="ChEBI" id="CHEBI:37565"/>
        <dbReference type="ChEBI" id="CHEBI:58462"/>
        <dbReference type="EC" id="3.5.4.16"/>
    </reaction>
</comment>
<comment type="pathway">
    <text evidence="1">Cofactor biosynthesis; 7,8-dihydroneopterin triphosphate biosynthesis; 7,8-dihydroneopterin triphosphate from GTP: step 1/1.</text>
</comment>
<comment type="similarity">
    <text evidence="1">Belongs to the GTP cyclohydrolase IV family.</text>
</comment>
<comment type="sequence caution" evidence="2">
    <conflict type="erroneous initiation">
        <sequence resource="EMBL-CDS" id="CAM08235"/>
    </conflict>
</comment>
<accession>Q9JV35</accession>
<accession>A1IR51</accession>
<dbReference type="EC" id="3.5.4.16" evidence="1"/>
<dbReference type="EMBL" id="AL157959">
    <property type="protein sequence ID" value="CAM08235.1"/>
    <property type="status" value="ALT_INIT"/>
    <property type="molecule type" value="Genomic_DNA"/>
</dbReference>
<dbReference type="PIR" id="C81949">
    <property type="entry name" value="C81949"/>
</dbReference>
<dbReference type="SMR" id="Q9JV35"/>
<dbReference type="DNASU" id="906989"/>
<dbReference type="EnsemblBacteria" id="CAM08235">
    <property type="protein sequence ID" value="CAM08235"/>
    <property type="gene ID" value="NMA1013"/>
</dbReference>
<dbReference type="KEGG" id="nma:NMA1013"/>
<dbReference type="HOGENOM" id="CLU_062816_1_1_4"/>
<dbReference type="UniPathway" id="UPA00848">
    <property type="reaction ID" value="UER00151"/>
</dbReference>
<dbReference type="Proteomes" id="UP000000626">
    <property type="component" value="Chromosome"/>
</dbReference>
<dbReference type="GO" id="GO:0003934">
    <property type="term" value="F:GTP cyclohydrolase I activity"/>
    <property type="evidence" value="ECO:0007669"/>
    <property type="project" value="UniProtKB-UniRule"/>
</dbReference>
<dbReference type="GO" id="GO:0046654">
    <property type="term" value="P:tetrahydrofolate biosynthetic process"/>
    <property type="evidence" value="ECO:0007669"/>
    <property type="project" value="UniProtKB-UniRule"/>
</dbReference>
<dbReference type="Gene3D" id="3.10.270.10">
    <property type="entry name" value="Urate Oxidase"/>
    <property type="match status" value="1"/>
</dbReference>
<dbReference type="HAMAP" id="MF_01527_B">
    <property type="entry name" value="GTP_cyclohydrol_B"/>
    <property type="match status" value="1"/>
</dbReference>
<dbReference type="InterPro" id="IPR022838">
    <property type="entry name" value="GTP_cyclohydrolase_FolE2"/>
</dbReference>
<dbReference type="InterPro" id="IPR003801">
    <property type="entry name" value="GTP_cyclohydrolase_FolE2/MptA"/>
</dbReference>
<dbReference type="NCBIfam" id="NF010200">
    <property type="entry name" value="PRK13674.1-1"/>
    <property type="match status" value="1"/>
</dbReference>
<dbReference type="PANTHER" id="PTHR36445">
    <property type="entry name" value="GTP CYCLOHYDROLASE MPTA"/>
    <property type="match status" value="1"/>
</dbReference>
<dbReference type="PANTHER" id="PTHR36445:SF1">
    <property type="entry name" value="GTP CYCLOHYDROLASE MPTA"/>
    <property type="match status" value="1"/>
</dbReference>
<dbReference type="Pfam" id="PF02649">
    <property type="entry name" value="GCHY-1"/>
    <property type="match status" value="1"/>
</dbReference>
<name>GCH4_NEIMA</name>
<evidence type="ECO:0000255" key="1">
    <source>
        <dbReference type="HAMAP-Rule" id="MF_01527"/>
    </source>
</evidence>
<evidence type="ECO:0000305" key="2"/>
<reference key="1">
    <citation type="journal article" date="2000" name="Nature">
        <title>Complete DNA sequence of a serogroup A strain of Neisseria meningitidis Z2491.</title>
        <authorList>
            <person name="Parkhill J."/>
            <person name="Achtman M."/>
            <person name="James K.D."/>
            <person name="Bentley S.D."/>
            <person name="Churcher C.M."/>
            <person name="Klee S.R."/>
            <person name="Morelli G."/>
            <person name="Basham D."/>
            <person name="Brown D."/>
            <person name="Chillingworth T."/>
            <person name="Davies R.M."/>
            <person name="Davis P."/>
            <person name="Devlin K."/>
            <person name="Feltwell T."/>
            <person name="Hamlin N."/>
            <person name="Holroyd S."/>
            <person name="Jagels K."/>
            <person name="Leather S."/>
            <person name="Moule S."/>
            <person name="Mungall K.L."/>
            <person name="Quail M.A."/>
            <person name="Rajandream M.A."/>
            <person name="Rutherford K.M."/>
            <person name="Simmonds M."/>
            <person name="Skelton J."/>
            <person name="Whitehead S."/>
            <person name="Spratt B.G."/>
            <person name="Barrell B.G."/>
        </authorList>
    </citation>
    <scope>NUCLEOTIDE SEQUENCE [LARGE SCALE GENOMIC DNA]</scope>
    <source>
        <strain>DSM 15465 / Z2491</strain>
    </source>
</reference>
<keyword id="KW-0378">Hydrolase</keyword>
<gene>
    <name evidence="1" type="primary">folE2</name>
    <name type="ordered locus">NMA1013</name>
</gene>